<geneLocation type="chloroplast"/>
<accession>B5LMN4</accession>
<evidence type="ECO:0000250" key="1"/>
<evidence type="ECO:0000255" key="2">
    <source>
        <dbReference type="HAMAP-Rule" id="MF_01395"/>
    </source>
</evidence>
<evidence type="ECO:0000255" key="3">
    <source>
        <dbReference type="PROSITE-ProRule" id="PRU01136"/>
    </source>
</evidence>
<gene>
    <name evidence="2" type="primary">accD</name>
</gene>
<name>ACCD_CICAR</name>
<proteinExistence type="inferred from homology"/>
<reference key="1">
    <citation type="journal article" date="2008" name="Mol. Phylogenet. Evol.">
        <title>Complete plastid genome sequence of the chickpea (Cicer arietinum) and the phylogenetic distribution of rps12 and clpP intron losses among legumes (Leguminosae).</title>
        <authorList>
            <person name="Jansen R.K."/>
            <person name="Wojciechowski M.F."/>
            <person name="Sanniyasi E."/>
            <person name="Lee S.-B."/>
            <person name="Daniell H."/>
        </authorList>
    </citation>
    <scope>NUCLEOTIDE SEQUENCE [LARGE SCALE GENOMIC DNA]</scope>
</reference>
<protein>
    <recommendedName>
        <fullName evidence="2">Acetyl-coenzyme A carboxylase carboxyl transferase subunit beta, chloroplastic</fullName>
        <shortName evidence="2">ACCase subunit beta</shortName>
        <shortName evidence="2">Acetyl-CoA carboxylase carboxyltransferase subunit beta</shortName>
        <ecNumber evidence="2">2.1.3.15</ecNumber>
    </recommendedName>
</protein>
<organism>
    <name type="scientific">Cicer arietinum</name>
    <name type="common">Chickpea</name>
    <name type="synonym">Garbanzo</name>
    <dbReference type="NCBI Taxonomy" id="3827"/>
    <lineage>
        <taxon>Eukaryota</taxon>
        <taxon>Viridiplantae</taxon>
        <taxon>Streptophyta</taxon>
        <taxon>Embryophyta</taxon>
        <taxon>Tracheophyta</taxon>
        <taxon>Spermatophyta</taxon>
        <taxon>Magnoliopsida</taxon>
        <taxon>eudicotyledons</taxon>
        <taxon>Gunneridae</taxon>
        <taxon>Pentapetalae</taxon>
        <taxon>rosids</taxon>
        <taxon>fabids</taxon>
        <taxon>Fabales</taxon>
        <taxon>Fabaceae</taxon>
        <taxon>Papilionoideae</taxon>
        <taxon>50 kb inversion clade</taxon>
        <taxon>NPAAA clade</taxon>
        <taxon>Hologalegina</taxon>
        <taxon>IRL clade</taxon>
        <taxon>Cicereae</taxon>
        <taxon>Cicer</taxon>
    </lineage>
</organism>
<dbReference type="EC" id="2.1.3.15" evidence="2"/>
<dbReference type="EMBL" id="EU835853">
    <property type="protein sequence ID" value="ACH41080.1"/>
    <property type="molecule type" value="Genomic_DNA"/>
</dbReference>
<dbReference type="RefSeq" id="YP_002149743.1">
    <property type="nucleotide sequence ID" value="NC_011163.1"/>
</dbReference>
<dbReference type="SMR" id="B5LMN4"/>
<dbReference type="PaxDb" id="3827-XP_004514812.1"/>
<dbReference type="GeneID" id="6797490"/>
<dbReference type="KEGG" id="cam:6797490"/>
<dbReference type="eggNOG" id="KOG0540">
    <property type="taxonomic scope" value="Eukaryota"/>
</dbReference>
<dbReference type="OrthoDB" id="838593at2759"/>
<dbReference type="UniPathway" id="UPA00655">
    <property type="reaction ID" value="UER00711"/>
</dbReference>
<dbReference type="Proteomes" id="UP000087171">
    <property type="component" value="Chloroplast Pltd"/>
</dbReference>
<dbReference type="GO" id="GO:0009317">
    <property type="term" value="C:acetyl-CoA carboxylase complex"/>
    <property type="evidence" value="ECO:0007669"/>
    <property type="project" value="InterPro"/>
</dbReference>
<dbReference type="GO" id="GO:0009570">
    <property type="term" value="C:chloroplast stroma"/>
    <property type="evidence" value="ECO:0007669"/>
    <property type="project" value="UniProtKB-SubCell"/>
</dbReference>
<dbReference type="GO" id="GO:0003989">
    <property type="term" value="F:acetyl-CoA carboxylase activity"/>
    <property type="evidence" value="ECO:0007669"/>
    <property type="project" value="InterPro"/>
</dbReference>
<dbReference type="GO" id="GO:0005524">
    <property type="term" value="F:ATP binding"/>
    <property type="evidence" value="ECO:0007669"/>
    <property type="project" value="UniProtKB-KW"/>
</dbReference>
<dbReference type="GO" id="GO:0016743">
    <property type="term" value="F:carboxyl- or carbamoyltransferase activity"/>
    <property type="evidence" value="ECO:0007669"/>
    <property type="project" value="UniProtKB-UniRule"/>
</dbReference>
<dbReference type="GO" id="GO:0008270">
    <property type="term" value="F:zinc ion binding"/>
    <property type="evidence" value="ECO:0007669"/>
    <property type="project" value="UniProtKB-UniRule"/>
</dbReference>
<dbReference type="GO" id="GO:0006633">
    <property type="term" value="P:fatty acid biosynthetic process"/>
    <property type="evidence" value="ECO:0007669"/>
    <property type="project" value="UniProtKB-KW"/>
</dbReference>
<dbReference type="GO" id="GO:2001295">
    <property type="term" value="P:malonyl-CoA biosynthetic process"/>
    <property type="evidence" value="ECO:0007669"/>
    <property type="project" value="UniProtKB-UniRule"/>
</dbReference>
<dbReference type="Gene3D" id="3.90.226.10">
    <property type="entry name" value="2-enoyl-CoA Hydratase, Chain A, domain 1"/>
    <property type="match status" value="1"/>
</dbReference>
<dbReference type="HAMAP" id="MF_01395">
    <property type="entry name" value="AcetylCoA_CT_beta"/>
    <property type="match status" value="1"/>
</dbReference>
<dbReference type="InterPro" id="IPR034733">
    <property type="entry name" value="AcCoA_carboxyl_beta"/>
</dbReference>
<dbReference type="InterPro" id="IPR000438">
    <property type="entry name" value="Acetyl_CoA_COase_Trfase_b_su"/>
</dbReference>
<dbReference type="InterPro" id="IPR029045">
    <property type="entry name" value="ClpP/crotonase-like_dom_sf"/>
</dbReference>
<dbReference type="InterPro" id="IPR011762">
    <property type="entry name" value="COA_CT_N"/>
</dbReference>
<dbReference type="NCBIfam" id="TIGR00515">
    <property type="entry name" value="accD"/>
    <property type="match status" value="1"/>
</dbReference>
<dbReference type="PANTHER" id="PTHR42995">
    <property type="entry name" value="ACETYL-COENZYME A CARBOXYLASE CARBOXYL TRANSFERASE SUBUNIT BETA, CHLOROPLASTIC"/>
    <property type="match status" value="1"/>
</dbReference>
<dbReference type="PANTHER" id="PTHR42995:SF5">
    <property type="entry name" value="ACETYL-COENZYME A CARBOXYLASE CARBOXYL TRANSFERASE SUBUNIT BETA, CHLOROPLASTIC"/>
    <property type="match status" value="1"/>
</dbReference>
<dbReference type="Pfam" id="PF01039">
    <property type="entry name" value="Carboxyl_trans"/>
    <property type="match status" value="1"/>
</dbReference>
<dbReference type="PRINTS" id="PR01070">
    <property type="entry name" value="ACCCTRFRASEB"/>
</dbReference>
<dbReference type="SUPFAM" id="SSF52096">
    <property type="entry name" value="ClpP/crotonase"/>
    <property type="match status" value="1"/>
</dbReference>
<dbReference type="PROSITE" id="PS50980">
    <property type="entry name" value="COA_CT_NTER"/>
    <property type="match status" value="1"/>
</dbReference>
<comment type="function">
    <text evidence="2">Component of the acetyl coenzyme A carboxylase (ACC) complex. Biotin carboxylase (BC) catalyzes the carboxylation of biotin on its carrier protein (BCCP) and then the CO(2) group is transferred by the transcarboxylase to acetyl-CoA to form malonyl-CoA.</text>
</comment>
<comment type="catalytic activity">
    <reaction evidence="2">
        <text>N(6)-carboxybiotinyl-L-lysyl-[protein] + acetyl-CoA = N(6)-biotinyl-L-lysyl-[protein] + malonyl-CoA</text>
        <dbReference type="Rhea" id="RHEA:54728"/>
        <dbReference type="Rhea" id="RHEA-COMP:10505"/>
        <dbReference type="Rhea" id="RHEA-COMP:10506"/>
        <dbReference type="ChEBI" id="CHEBI:57288"/>
        <dbReference type="ChEBI" id="CHEBI:57384"/>
        <dbReference type="ChEBI" id="CHEBI:83144"/>
        <dbReference type="ChEBI" id="CHEBI:83145"/>
        <dbReference type="EC" id="2.1.3.15"/>
    </reaction>
</comment>
<comment type="cofactor">
    <cofactor evidence="2">
        <name>Zn(2+)</name>
        <dbReference type="ChEBI" id="CHEBI:29105"/>
    </cofactor>
    <text evidence="2">Binds 1 zinc ion per subunit.</text>
</comment>
<comment type="pathway">
    <text evidence="2">Lipid metabolism; malonyl-CoA biosynthesis; malonyl-CoA from acetyl-CoA: step 1/1.</text>
</comment>
<comment type="subunit">
    <text evidence="1">Acetyl-CoA carboxylase is a heterohexamer composed of biotin carboxyl carrier protein, biotin carboxylase and 2 subunits each of ACCase subunit alpha and ACCase plastid-coded subunit beta (accD).</text>
</comment>
<comment type="subcellular location">
    <subcellularLocation>
        <location evidence="2">Plastid</location>
        <location evidence="2">Chloroplast stroma</location>
    </subcellularLocation>
</comment>
<comment type="similarity">
    <text evidence="2">Belongs to the AccD/PCCB family.</text>
</comment>
<keyword id="KW-0067">ATP-binding</keyword>
<keyword id="KW-0150">Chloroplast</keyword>
<keyword id="KW-0275">Fatty acid biosynthesis</keyword>
<keyword id="KW-0276">Fatty acid metabolism</keyword>
<keyword id="KW-0444">Lipid biosynthesis</keyword>
<keyword id="KW-0443">Lipid metabolism</keyword>
<keyword id="KW-0479">Metal-binding</keyword>
<keyword id="KW-0547">Nucleotide-binding</keyword>
<keyword id="KW-0934">Plastid</keyword>
<keyword id="KW-1185">Reference proteome</keyword>
<keyword id="KW-0808">Transferase</keyword>
<keyword id="KW-0862">Zinc</keyword>
<keyword id="KW-0863">Zinc-finger</keyword>
<sequence length="460" mass="52180">MEKWWFNSMLFNKKLEYRCGLSKSIDSFGPIEKKSEEPSIVTDNDSYSHVDYLVDVSNRQNFLSDKTFLVRDRNSYSYSIFFAIENKILEIDYDSQFNWKNIINSCIENYLRSQICIDSDILDNSFKYNDNDSDVYSYICGKVTNSSQSTSTDVITITNDSEKESFNDDDDFTQKYKHLWVQCESCYGLNYKKFFKSKMNICEHCGDHLKMSSSDRIELLIDPGTWNPRDEDMVSLDPIEFDPIELDPIELDPIELDSEDEPYKTRLDSYQKRTGLSEAVQTGTGQINGIPVAIGIMDFQFMGGSMGSVVGEKITRLIEYATNQLLPLIIVCASGGARMQEGSLSLMQMAKISSALYNYQINQKLFYVAILTSPTTGGVTASFGMLGDIIIAEPNAYIAFAGKRVIEQTLNTEVPEGSQSAEFLFEKGLFDSIVPRNLLKEVLGELFQFHGFFPLTQNGN</sequence>
<feature type="chain" id="PRO_0000359130" description="Acetyl-coenzyme A carboxylase carboxyl transferase subunit beta, chloroplastic">
    <location>
        <begin position="1"/>
        <end position="460"/>
    </location>
</feature>
<feature type="domain" description="CoA carboxyltransferase N-terminal" evidence="3">
    <location>
        <begin position="179"/>
        <end position="460"/>
    </location>
</feature>
<feature type="zinc finger region" description="C4-type" evidence="2">
    <location>
        <begin position="183"/>
        <end position="205"/>
    </location>
</feature>
<feature type="binding site" evidence="2">
    <location>
        <position position="183"/>
    </location>
    <ligand>
        <name>Zn(2+)</name>
        <dbReference type="ChEBI" id="CHEBI:29105"/>
    </ligand>
</feature>
<feature type="binding site" evidence="2">
    <location>
        <position position="186"/>
    </location>
    <ligand>
        <name>Zn(2+)</name>
        <dbReference type="ChEBI" id="CHEBI:29105"/>
    </ligand>
</feature>
<feature type="binding site" evidence="2">
    <location>
        <position position="202"/>
    </location>
    <ligand>
        <name>Zn(2+)</name>
        <dbReference type="ChEBI" id="CHEBI:29105"/>
    </ligand>
</feature>
<feature type="binding site" evidence="2">
    <location>
        <position position="205"/>
    </location>
    <ligand>
        <name>Zn(2+)</name>
        <dbReference type="ChEBI" id="CHEBI:29105"/>
    </ligand>
</feature>